<accession>A7E346</accession>
<comment type="function">
    <text evidence="1">Transcriptional coactivator. Stimulates the transcriptional activity of MEF2C. Stimulates MYOD1 activity in part via MEF2, resulting in an enhancement of skeletal muscle differentiation (By similarity).</text>
</comment>
<comment type="subunit">
    <text evidence="1">Interacts with MEF2C.</text>
</comment>
<comment type="subcellular location">
    <subcellularLocation>
        <location evidence="1">Nucleus</location>
    </subcellularLocation>
</comment>
<gene>
    <name type="primary">MAMSTR</name>
    <name type="synonym">MASTR</name>
</gene>
<evidence type="ECO:0000250" key="1"/>
<evidence type="ECO:0000255" key="2">
    <source>
        <dbReference type="PROSITE-ProRule" id="PRU00186"/>
    </source>
</evidence>
<evidence type="ECO:0000256" key="3">
    <source>
        <dbReference type="SAM" id="MobiDB-lite"/>
    </source>
</evidence>
<dbReference type="EMBL" id="AAFC03027484">
    <property type="status" value="NOT_ANNOTATED_CDS"/>
    <property type="molecule type" value="Genomic_DNA"/>
</dbReference>
<dbReference type="EMBL" id="BC151712">
    <property type="protein sequence ID" value="AAI51713.1"/>
    <property type="molecule type" value="mRNA"/>
</dbReference>
<dbReference type="RefSeq" id="NP_001181940.1">
    <property type="nucleotide sequence ID" value="NM_001195011.1"/>
</dbReference>
<dbReference type="RefSeq" id="XP_005219251.1">
    <property type="nucleotide sequence ID" value="XM_005219194.4"/>
</dbReference>
<dbReference type="RefSeq" id="XP_005219252.1">
    <property type="nucleotide sequence ID" value="XM_005219195.4"/>
</dbReference>
<dbReference type="RefSeq" id="XP_010813311.1">
    <property type="nucleotide sequence ID" value="XM_010815009.2"/>
</dbReference>
<dbReference type="RefSeq" id="XP_059732530.1">
    <property type="nucleotide sequence ID" value="XM_059876547.1"/>
</dbReference>
<dbReference type="SMR" id="A7E346"/>
<dbReference type="FunCoup" id="A7E346">
    <property type="interactions" value="29"/>
</dbReference>
<dbReference type="STRING" id="9913.ENSBTAP00000015429"/>
<dbReference type="PaxDb" id="9913-ENSBTAP00000015429"/>
<dbReference type="GeneID" id="505540"/>
<dbReference type="KEGG" id="bta:505540"/>
<dbReference type="CTD" id="284358"/>
<dbReference type="VEuPathDB" id="HostDB:ENSBTAG00000011617"/>
<dbReference type="eggNOG" id="ENOG502RJE6">
    <property type="taxonomic scope" value="Eukaryota"/>
</dbReference>
<dbReference type="HOGENOM" id="CLU_055830_0_0_1"/>
<dbReference type="InParanoid" id="A7E346"/>
<dbReference type="OMA" id="PKISQHW"/>
<dbReference type="OrthoDB" id="197676at2759"/>
<dbReference type="Proteomes" id="UP000009136">
    <property type="component" value="Chromosome 18"/>
</dbReference>
<dbReference type="Bgee" id="ENSBTAG00000011617">
    <property type="expression patterns" value="Expressed in corpus luteum and 98 other cell types or tissues"/>
</dbReference>
<dbReference type="GO" id="GO:0005634">
    <property type="term" value="C:nucleus"/>
    <property type="evidence" value="ECO:0000318"/>
    <property type="project" value="GO_Central"/>
</dbReference>
<dbReference type="GO" id="GO:0003712">
    <property type="term" value="F:transcription coregulator activity"/>
    <property type="evidence" value="ECO:0000318"/>
    <property type="project" value="GO_Central"/>
</dbReference>
<dbReference type="GO" id="GO:0006357">
    <property type="term" value="P:regulation of transcription by RNA polymerase II"/>
    <property type="evidence" value="ECO:0000318"/>
    <property type="project" value="GO_Central"/>
</dbReference>
<dbReference type="FunFam" id="1.10.720.30:FF:000016">
    <property type="entry name" value="MEF2-activating motif and SAP domain-containing transcriptional regulator isoform X2"/>
    <property type="match status" value="1"/>
</dbReference>
<dbReference type="Gene3D" id="1.10.720.30">
    <property type="entry name" value="SAP domain"/>
    <property type="match status" value="1"/>
</dbReference>
<dbReference type="InterPro" id="IPR003034">
    <property type="entry name" value="SAP_dom"/>
</dbReference>
<dbReference type="InterPro" id="IPR036361">
    <property type="entry name" value="SAP_dom_sf"/>
</dbReference>
<dbReference type="InterPro" id="IPR052305">
    <property type="entry name" value="TransReg_TumorExp"/>
</dbReference>
<dbReference type="PANTHER" id="PTHR23251">
    <property type="entry name" value="LYSINE-RICH CEACAM1 CO-ISOLATED PROTEIN LYRIC PROTEIN"/>
    <property type="match status" value="1"/>
</dbReference>
<dbReference type="PANTHER" id="PTHR23251:SF1">
    <property type="entry name" value="MEF2-ACTIVATING MOTIF AND SAP DOMAIN-CONTAINING TRANSCRIPTIONAL REGULATOR"/>
    <property type="match status" value="1"/>
</dbReference>
<dbReference type="Pfam" id="PF02037">
    <property type="entry name" value="SAP"/>
    <property type="match status" value="1"/>
</dbReference>
<dbReference type="SMART" id="SM00513">
    <property type="entry name" value="SAP"/>
    <property type="match status" value="1"/>
</dbReference>
<dbReference type="SUPFAM" id="SSF68906">
    <property type="entry name" value="SAP domain"/>
    <property type="match status" value="1"/>
</dbReference>
<dbReference type="PROSITE" id="PS50800">
    <property type="entry name" value="SAP"/>
    <property type="match status" value="1"/>
</dbReference>
<feature type="chain" id="PRO_0000319980" description="MEF2-activating motif and SAP domain-containing transcriptional regulator">
    <location>
        <begin position="1"/>
        <end position="430"/>
    </location>
</feature>
<feature type="domain" description="SAP" evidence="2">
    <location>
        <begin position="181"/>
        <end position="215"/>
    </location>
</feature>
<feature type="region of interest" description="Disordered" evidence="3">
    <location>
        <begin position="84"/>
        <end position="172"/>
    </location>
</feature>
<feature type="region of interest" description="Disordered" evidence="3">
    <location>
        <begin position="204"/>
        <end position="239"/>
    </location>
</feature>
<feature type="region of interest" description="Transcription activation" evidence="1">
    <location>
        <begin position="224"/>
        <end position="430"/>
    </location>
</feature>
<feature type="region of interest" description="Disordered" evidence="3">
    <location>
        <begin position="280"/>
        <end position="301"/>
    </location>
</feature>
<feature type="region of interest" description="Disordered" evidence="3">
    <location>
        <begin position="330"/>
        <end position="416"/>
    </location>
</feature>
<feature type="short sequence motif" description="MEF2-binding" evidence="1">
    <location>
        <begin position="12"/>
        <end position="28"/>
    </location>
</feature>
<feature type="compositionally biased region" description="Basic and acidic residues" evidence="3">
    <location>
        <begin position="87"/>
        <end position="103"/>
    </location>
</feature>
<feature type="compositionally biased region" description="Pro residues" evidence="3">
    <location>
        <begin position="147"/>
        <end position="170"/>
    </location>
</feature>
<feature type="compositionally biased region" description="Basic and acidic residues" evidence="3">
    <location>
        <begin position="207"/>
        <end position="228"/>
    </location>
</feature>
<feature type="compositionally biased region" description="Low complexity" evidence="3">
    <location>
        <begin position="363"/>
        <end position="373"/>
    </location>
</feature>
<feature type="compositionally biased region" description="Low complexity" evidence="3">
    <location>
        <begin position="393"/>
        <end position="403"/>
    </location>
</feature>
<protein>
    <recommendedName>
        <fullName>MEF2-activating motif and SAP domain-containing transcriptional regulator</fullName>
    </recommendedName>
    <alternativeName>
        <fullName>MEF2-activating SAP transcriptional regulatory protein</fullName>
    </alternativeName>
</protein>
<keyword id="KW-0010">Activator</keyword>
<keyword id="KW-0539">Nucleus</keyword>
<keyword id="KW-1185">Reference proteome</keyword>
<keyword id="KW-0804">Transcription</keyword>
<keyword id="KW-0805">Transcription regulation</keyword>
<name>MASTR_BOVIN</name>
<reference key="1">
    <citation type="journal article" date="2009" name="Science">
        <title>The genome sequence of taurine cattle: a window to ruminant biology and evolution.</title>
        <authorList>
            <consortium name="The bovine genome sequencing and analysis consortium"/>
        </authorList>
    </citation>
    <scope>NUCLEOTIDE SEQUENCE [LARGE SCALE GENOMIC DNA]</scope>
    <source>
        <strain>Hereford</strain>
    </source>
</reference>
<reference key="2">
    <citation type="submission" date="2007-08" db="EMBL/GenBank/DDBJ databases">
        <authorList>
            <consortium name="NIH - Mammalian Gene Collection (MGC) project"/>
        </authorList>
    </citation>
    <scope>NUCLEOTIDE SEQUENCE [LARGE SCALE MRNA] OF 20-430</scope>
    <source>
        <strain>Hereford</strain>
        <tissue>Ascending colon</tissue>
    </source>
</reference>
<organism>
    <name type="scientific">Bos taurus</name>
    <name type="common">Bovine</name>
    <dbReference type="NCBI Taxonomy" id="9913"/>
    <lineage>
        <taxon>Eukaryota</taxon>
        <taxon>Metazoa</taxon>
        <taxon>Chordata</taxon>
        <taxon>Craniata</taxon>
        <taxon>Vertebrata</taxon>
        <taxon>Euteleostomi</taxon>
        <taxon>Mammalia</taxon>
        <taxon>Eutheria</taxon>
        <taxon>Laurasiatheria</taxon>
        <taxon>Artiodactyla</taxon>
        <taxon>Ruminantia</taxon>
        <taxon>Pecora</taxon>
        <taxon>Bovidae</taxon>
        <taxon>Bovinae</taxon>
        <taxon>Bos</taxon>
    </lineage>
</organism>
<sequence>MTLAASSQRSQIIRSKFRSVLQLRIHRRYQDPTLSGSFTASPVLDPDPWISAADPALALAPASPLGPAPFLFNPEVLLPEPKPCWSLKKESPKTSQHWREPKPKGNLTYHQYIPPEPRQGYRADPQVEGSPLDPPGPPLWEGTTSQQPPPRMKPTPLTPSPPGVPSPSPLPHKLELQTLKLEELTVSELRQQLRLRGLPVSGTKSMLLERMRGGAPPRERPKARREDSAAGAPWPRFRPKALGAARSACSFKLSPTSHSPPPPRAVETLVTASASAPVPVATTAQAPTPAPVPVPSSAPASTALTLEEELQEAIRRAQLLPNRGIDDILEDQVEPEDPLPAIPLDFPGSFDMLSPSPDSEGLSSVFSSSLPSPTNSPSPSPRGPTDFLDWLEALSGGPSLGCGPPAPSIFSADLSDSSGTRLWDLLEDPW</sequence>
<proteinExistence type="evidence at transcript level"/>